<proteinExistence type="inferred from homology"/>
<comment type="function">
    <text evidence="1">May be involved in the transport of PQQ or its precursor to the periplasm.</text>
</comment>
<comment type="pathway">
    <text evidence="1">Cofactor biosynthesis; pyrroloquinoline quinone biosynthesis.</text>
</comment>
<comment type="similarity">
    <text evidence="1">Belongs to the PqqB family.</text>
</comment>
<dbReference type="EMBL" id="CU468230">
    <property type="protein sequence ID" value="CAP01313.1"/>
    <property type="molecule type" value="Genomic_DNA"/>
</dbReference>
<dbReference type="SMR" id="B0VQD4"/>
<dbReference type="KEGG" id="abm:ABSDF1980"/>
<dbReference type="HOGENOM" id="CLU_061120_0_0_6"/>
<dbReference type="UniPathway" id="UPA00539"/>
<dbReference type="Proteomes" id="UP000001741">
    <property type="component" value="Chromosome"/>
</dbReference>
<dbReference type="GO" id="GO:0018189">
    <property type="term" value="P:pyrroloquinoline quinone biosynthetic process"/>
    <property type="evidence" value="ECO:0007669"/>
    <property type="project" value="UniProtKB-UniRule"/>
</dbReference>
<dbReference type="CDD" id="cd16274">
    <property type="entry name" value="PQQB-like_MBL-fold"/>
    <property type="match status" value="1"/>
</dbReference>
<dbReference type="Gene3D" id="3.60.15.10">
    <property type="entry name" value="Ribonuclease Z/Hydroxyacylglutathione hydrolase-like"/>
    <property type="match status" value="1"/>
</dbReference>
<dbReference type="HAMAP" id="MF_00653">
    <property type="entry name" value="PQQ_syn_PqqB"/>
    <property type="match status" value="1"/>
</dbReference>
<dbReference type="InterPro" id="IPR001279">
    <property type="entry name" value="Metallo-B-lactamas"/>
</dbReference>
<dbReference type="InterPro" id="IPR011842">
    <property type="entry name" value="PQQ_synth_PqqB"/>
</dbReference>
<dbReference type="InterPro" id="IPR036866">
    <property type="entry name" value="RibonucZ/Hydroxyglut_hydro"/>
</dbReference>
<dbReference type="NCBIfam" id="TIGR02108">
    <property type="entry name" value="PQQ_syn_pqqB"/>
    <property type="match status" value="1"/>
</dbReference>
<dbReference type="PANTHER" id="PTHR42663:SF7">
    <property type="entry name" value="COENZYME PQQ SYNTHESIS PROTEIN B"/>
    <property type="match status" value="1"/>
</dbReference>
<dbReference type="PANTHER" id="PTHR42663">
    <property type="entry name" value="HYDROLASE C777.06C-RELATED-RELATED"/>
    <property type="match status" value="1"/>
</dbReference>
<dbReference type="Pfam" id="PF12706">
    <property type="entry name" value="Lactamase_B_2"/>
    <property type="match status" value="1"/>
</dbReference>
<dbReference type="SUPFAM" id="SSF56281">
    <property type="entry name" value="Metallo-hydrolase/oxidoreductase"/>
    <property type="match status" value="1"/>
</dbReference>
<name>PQQB_ACIBS</name>
<evidence type="ECO:0000255" key="1">
    <source>
        <dbReference type="HAMAP-Rule" id="MF_00653"/>
    </source>
</evidence>
<keyword id="KW-0884">PQQ biosynthesis</keyword>
<keyword id="KW-0813">Transport</keyword>
<sequence>MHIYILGSAAGGGCPQWNCNCPNCHGVRTGTINAKVRTQSSIAISENGVDWILLNASPDIRQQLFDFKAAQPARKLRDTGITNVILMDSQLDHTTGLLTLREGCPMNVWCTEMVYQDLTTGFPVFNMLKHWNGGLQYHQVDPKQAFIIDGFENLEFLPLIIQSAAPPYSPHRHDPHEGDNIALIIKDHKTQKQLFYAPGLGKIDDQIMQIMQDSDCVMIDGTLWTDDEMQQTGVGKKTGREMGHLYISGEGGSLSYLNQLSTPKKVLIHINNTNPILNEDSAQFAELKANGVEVAFDGMQIEL</sequence>
<organism>
    <name type="scientific">Acinetobacter baumannii (strain SDF)</name>
    <dbReference type="NCBI Taxonomy" id="509170"/>
    <lineage>
        <taxon>Bacteria</taxon>
        <taxon>Pseudomonadati</taxon>
        <taxon>Pseudomonadota</taxon>
        <taxon>Gammaproteobacteria</taxon>
        <taxon>Moraxellales</taxon>
        <taxon>Moraxellaceae</taxon>
        <taxon>Acinetobacter</taxon>
        <taxon>Acinetobacter calcoaceticus/baumannii complex</taxon>
    </lineage>
</organism>
<protein>
    <recommendedName>
        <fullName evidence="1">Coenzyme PQQ synthesis protein B</fullName>
    </recommendedName>
    <alternativeName>
        <fullName evidence="1">Pyrroloquinoline quinone biosynthesis protein B</fullName>
    </alternativeName>
</protein>
<accession>B0VQD4</accession>
<feature type="chain" id="PRO_1000131158" description="Coenzyme PQQ synthesis protein B">
    <location>
        <begin position="1"/>
        <end position="303"/>
    </location>
</feature>
<gene>
    <name evidence="1" type="primary">pqqB</name>
    <name type="ordered locus">ABSDF1980</name>
</gene>
<reference key="1">
    <citation type="journal article" date="2008" name="PLoS ONE">
        <title>Comparative analysis of Acinetobacters: three genomes for three lifestyles.</title>
        <authorList>
            <person name="Vallenet D."/>
            <person name="Nordmann P."/>
            <person name="Barbe V."/>
            <person name="Poirel L."/>
            <person name="Mangenot S."/>
            <person name="Bataille E."/>
            <person name="Dossat C."/>
            <person name="Gas S."/>
            <person name="Kreimeyer A."/>
            <person name="Lenoble P."/>
            <person name="Oztas S."/>
            <person name="Poulain J."/>
            <person name="Segurens B."/>
            <person name="Robert C."/>
            <person name="Abergel C."/>
            <person name="Claverie J.-M."/>
            <person name="Raoult D."/>
            <person name="Medigue C."/>
            <person name="Weissenbach J."/>
            <person name="Cruveiller S."/>
        </authorList>
    </citation>
    <scope>NUCLEOTIDE SEQUENCE [LARGE SCALE GENOMIC DNA]</scope>
    <source>
        <strain>SDF</strain>
    </source>
</reference>